<name>ORN2_PLAOR</name>
<reference key="1">
    <citation type="journal article" date="1991" name="Eur. J. Biochem.">
        <title>Ornatins: potent glycoprotein IIb-IIIa antagonists and platelet aggregation inhibitors from the leech Placobdella ornata.</title>
        <authorList>
            <person name="Mazur P."/>
            <person name="Henzel W.J."/>
            <person name="Seymour J.L."/>
            <person name="Lazarus R.A."/>
        </authorList>
    </citation>
    <scope>PROTEIN SEQUENCE</scope>
</reference>
<protein>
    <recommendedName>
        <fullName>Ornatin-A2</fullName>
    </recommendedName>
</protein>
<dbReference type="PIR" id="S19566">
    <property type="entry name" value="S19566"/>
</dbReference>
<dbReference type="SMR" id="P25509"/>
<dbReference type="GO" id="GO:0005576">
    <property type="term" value="C:extracellular region"/>
    <property type="evidence" value="ECO:0007669"/>
    <property type="project" value="UniProtKB-SubCell"/>
</dbReference>
<dbReference type="GO" id="GO:0007155">
    <property type="term" value="P:cell adhesion"/>
    <property type="evidence" value="ECO:0007669"/>
    <property type="project" value="UniProtKB-KW"/>
</dbReference>
<dbReference type="GO" id="GO:0030193">
    <property type="term" value="P:regulation of blood coagulation"/>
    <property type="evidence" value="ECO:0007669"/>
    <property type="project" value="InterPro"/>
</dbReference>
<dbReference type="InterPro" id="IPR002463">
    <property type="entry name" value="Ornatin"/>
</dbReference>
<dbReference type="Pfam" id="PF02088">
    <property type="entry name" value="Ornatin"/>
    <property type="match status" value="1"/>
</dbReference>
<dbReference type="PRINTS" id="PR01184">
    <property type="entry name" value="ORNATIN"/>
</dbReference>
<comment type="function">
    <text>Potent inhibitor of fibrinogen interaction with platelet receptors expressed on glycoprotein IIb-IIIa complex. May prevent blood from clotting during either feeding and/or storage of ingested blood.</text>
</comment>
<comment type="subcellular location">
    <subcellularLocation>
        <location>Secreted</location>
    </subcellularLocation>
</comment>
<comment type="similarity">
    <text evidence="1">Belongs to the ornatin family.</text>
</comment>
<proteinExistence type="evidence at protein level"/>
<sequence>IPQCRDVKESGQPNDKCRCNGKPCTVGKCTIARGDDNDKCT</sequence>
<keyword id="KW-0130">Cell adhesion</keyword>
<keyword id="KW-0903">Direct protein sequencing</keyword>
<keyword id="KW-0964">Secreted</keyword>
<organism>
    <name type="scientific">Placobdella ornata</name>
    <name type="common">Turtle leech</name>
    <dbReference type="NCBI Taxonomy" id="6415"/>
    <lineage>
        <taxon>Eukaryota</taxon>
        <taxon>Metazoa</taxon>
        <taxon>Spiralia</taxon>
        <taxon>Lophotrochozoa</taxon>
        <taxon>Annelida</taxon>
        <taxon>Clitellata</taxon>
        <taxon>Hirudinea</taxon>
        <taxon>Rhynchobdellida</taxon>
        <taxon>Glossiphoniidae</taxon>
        <taxon>Placobdella</taxon>
    </lineage>
</organism>
<accession>P25509</accession>
<feature type="chain" id="PRO_0000215260" description="Ornatin-A2">
    <location>
        <begin position="1"/>
        <end position="41"/>
    </location>
</feature>
<feature type="short sequence motif" description="Cell attachment site">
    <location>
        <begin position="33"/>
        <end position="35"/>
    </location>
</feature>
<evidence type="ECO:0000305" key="1"/>